<sequence>MEWEPVIGLEVHVQLRTQSKIFSGAATAYGAEPNTQACAIDLGLPGVLPVLNKEAVKLAVCFGLSVNASIPPYSIFARKNYFYPDLPKGYQISQYNFPIVQNGHLDIENEDGTTKRIGITRAHLEEDAGKSFHEGMQGYSGIDFNRAGTPLLEIVSEPDIRSAQEAVAYLKALHSLVRYIGVSDANMQEGAFRCDVNISLRPKGEEKFGTRAEIKNVNSFRFVERAILFEINRQKEILENGGTIVQETRLYDAVQDETRSMRTKEEAHDYRYFPDPDLLPVEIGPEFIEAVKNQLPELPWEKRKRFAASYQLSNYDVKLLTTQIEIANYFETVLKIDKTIPPKLAANWINGDLAAALNKNNLSITQSPINAEQLAGLLHRIADNTLSGSMGKQVFETMWGGEGDADTIIERHGLKQITDTEALEKIIDEVIENNPTQVEQYRSGKDKLIAFFVGQVMKATKGKANPQQVNELFKKKL</sequence>
<keyword id="KW-0067">ATP-binding</keyword>
<keyword id="KW-0436">Ligase</keyword>
<keyword id="KW-0547">Nucleotide-binding</keyword>
<keyword id="KW-0648">Protein biosynthesis</keyword>
<proteinExistence type="inferred from homology"/>
<organism>
    <name type="scientific">Coxiella burnetii (strain Dugway 5J108-111)</name>
    <dbReference type="NCBI Taxonomy" id="434922"/>
    <lineage>
        <taxon>Bacteria</taxon>
        <taxon>Pseudomonadati</taxon>
        <taxon>Pseudomonadota</taxon>
        <taxon>Gammaproteobacteria</taxon>
        <taxon>Legionellales</taxon>
        <taxon>Coxiellaceae</taxon>
        <taxon>Coxiella</taxon>
    </lineage>
</organism>
<accession>A9KBI1</accession>
<evidence type="ECO:0000255" key="1">
    <source>
        <dbReference type="HAMAP-Rule" id="MF_00121"/>
    </source>
</evidence>
<feature type="chain" id="PRO_1000076157" description="Aspartyl/glutamyl-tRNA(Asn/Gln) amidotransferase subunit B">
    <location>
        <begin position="1"/>
        <end position="477"/>
    </location>
</feature>
<gene>
    <name evidence="1" type="primary">gatB</name>
    <name type="ordered locus">CBUD_0519</name>
</gene>
<name>GATB_COXBN</name>
<reference key="1">
    <citation type="journal article" date="2009" name="Infect. Immun.">
        <title>Comparative genomics reveal extensive transposon-mediated genomic plasticity and diversity among potential effector proteins within the genus Coxiella.</title>
        <authorList>
            <person name="Beare P.A."/>
            <person name="Unsworth N."/>
            <person name="Andoh M."/>
            <person name="Voth D.E."/>
            <person name="Omsland A."/>
            <person name="Gilk S.D."/>
            <person name="Williams K.P."/>
            <person name="Sobral B.W."/>
            <person name="Kupko J.J. III"/>
            <person name="Porcella S.F."/>
            <person name="Samuel J.E."/>
            <person name="Heinzen R.A."/>
        </authorList>
    </citation>
    <scope>NUCLEOTIDE SEQUENCE [LARGE SCALE GENOMIC DNA]</scope>
    <source>
        <strain>Dugway 5J108-111</strain>
    </source>
</reference>
<comment type="function">
    <text evidence="1">Allows the formation of correctly charged Asn-tRNA(Asn) or Gln-tRNA(Gln) through the transamidation of misacylated Asp-tRNA(Asn) or Glu-tRNA(Gln) in organisms which lack either or both of asparaginyl-tRNA or glutaminyl-tRNA synthetases. The reaction takes place in the presence of glutamine and ATP through an activated phospho-Asp-tRNA(Asn) or phospho-Glu-tRNA(Gln).</text>
</comment>
<comment type="catalytic activity">
    <reaction evidence="1">
        <text>L-glutamyl-tRNA(Gln) + L-glutamine + ATP + H2O = L-glutaminyl-tRNA(Gln) + L-glutamate + ADP + phosphate + H(+)</text>
        <dbReference type="Rhea" id="RHEA:17521"/>
        <dbReference type="Rhea" id="RHEA-COMP:9681"/>
        <dbReference type="Rhea" id="RHEA-COMP:9684"/>
        <dbReference type="ChEBI" id="CHEBI:15377"/>
        <dbReference type="ChEBI" id="CHEBI:15378"/>
        <dbReference type="ChEBI" id="CHEBI:29985"/>
        <dbReference type="ChEBI" id="CHEBI:30616"/>
        <dbReference type="ChEBI" id="CHEBI:43474"/>
        <dbReference type="ChEBI" id="CHEBI:58359"/>
        <dbReference type="ChEBI" id="CHEBI:78520"/>
        <dbReference type="ChEBI" id="CHEBI:78521"/>
        <dbReference type="ChEBI" id="CHEBI:456216"/>
    </reaction>
</comment>
<comment type="catalytic activity">
    <reaction evidence="1">
        <text>L-aspartyl-tRNA(Asn) + L-glutamine + ATP + H2O = L-asparaginyl-tRNA(Asn) + L-glutamate + ADP + phosphate + 2 H(+)</text>
        <dbReference type="Rhea" id="RHEA:14513"/>
        <dbReference type="Rhea" id="RHEA-COMP:9674"/>
        <dbReference type="Rhea" id="RHEA-COMP:9677"/>
        <dbReference type="ChEBI" id="CHEBI:15377"/>
        <dbReference type="ChEBI" id="CHEBI:15378"/>
        <dbReference type="ChEBI" id="CHEBI:29985"/>
        <dbReference type="ChEBI" id="CHEBI:30616"/>
        <dbReference type="ChEBI" id="CHEBI:43474"/>
        <dbReference type="ChEBI" id="CHEBI:58359"/>
        <dbReference type="ChEBI" id="CHEBI:78515"/>
        <dbReference type="ChEBI" id="CHEBI:78516"/>
        <dbReference type="ChEBI" id="CHEBI:456216"/>
    </reaction>
</comment>
<comment type="subunit">
    <text evidence="1">Heterotrimer of A, B and C subunits.</text>
</comment>
<comment type="similarity">
    <text evidence="1">Belongs to the GatB/GatE family. GatB subfamily.</text>
</comment>
<dbReference type="EC" id="6.3.5.-" evidence="1"/>
<dbReference type="EMBL" id="CP000733">
    <property type="protein sequence ID" value="ABS77117.1"/>
    <property type="molecule type" value="Genomic_DNA"/>
</dbReference>
<dbReference type="RefSeq" id="WP_005772006.1">
    <property type="nucleotide sequence ID" value="NC_009727.1"/>
</dbReference>
<dbReference type="SMR" id="A9KBI1"/>
<dbReference type="KEGG" id="cbd:CBUD_0519"/>
<dbReference type="HOGENOM" id="CLU_019240_0_0_6"/>
<dbReference type="Proteomes" id="UP000008555">
    <property type="component" value="Chromosome"/>
</dbReference>
<dbReference type="GO" id="GO:0050566">
    <property type="term" value="F:asparaginyl-tRNA synthase (glutamine-hydrolyzing) activity"/>
    <property type="evidence" value="ECO:0007669"/>
    <property type="project" value="RHEA"/>
</dbReference>
<dbReference type="GO" id="GO:0005524">
    <property type="term" value="F:ATP binding"/>
    <property type="evidence" value="ECO:0007669"/>
    <property type="project" value="UniProtKB-KW"/>
</dbReference>
<dbReference type="GO" id="GO:0050567">
    <property type="term" value="F:glutaminyl-tRNA synthase (glutamine-hydrolyzing) activity"/>
    <property type="evidence" value="ECO:0007669"/>
    <property type="project" value="UniProtKB-UniRule"/>
</dbReference>
<dbReference type="GO" id="GO:0070681">
    <property type="term" value="P:glutaminyl-tRNAGln biosynthesis via transamidation"/>
    <property type="evidence" value="ECO:0007669"/>
    <property type="project" value="TreeGrafter"/>
</dbReference>
<dbReference type="GO" id="GO:0006412">
    <property type="term" value="P:translation"/>
    <property type="evidence" value="ECO:0007669"/>
    <property type="project" value="UniProtKB-UniRule"/>
</dbReference>
<dbReference type="FunFam" id="1.10.10.410:FF:000001">
    <property type="entry name" value="Aspartyl/glutamyl-tRNA(Asn/Gln) amidotransferase subunit B"/>
    <property type="match status" value="1"/>
</dbReference>
<dbReference type="FunFam" id="1.10.150.380:FF:000001">
    <property type="entry name" value="Aspartyl/glutamyl-tRNA(Asn/Gln) amidotransferase subunit B"/>
    <property type="match status" value="1"/>
</dbReference>
<dbReference type="Gene3D" id="1.10.10.410">
    <property type="match status" value="1"/>
</dbReference>
<dbReference type="Gene3D" id="1.10.150.380">
    <property type="entry name" value="GatB domain, N-terminal subdomain"/>
    <property type="match status" value="1"/>
</dbReference>
<dbReference type="HAMAP" id="MF_00121">
    <property type="entry name" value="GatB"/>
    <property type="match status" value="1"/>
</dbReference>
<dbReference type="InterPro" id="IPR017959">
    <property type="entry name" value="Asn/Gln-tRNA_amidoTrfase_suB/E"/>
</dbReference>
<dbReference type="InterPro" id="IPR006075">
    <property type="entry name" value="Asn/Gln-tRNA_Trfase_suB/E_cat"/>
</dbReference>
<dbReference type="InterPro" id="IPR018027">
    <property type="entry name" value="Asn/Gln_amidotransferase"/>
</dbReference>
<dbReference type="InterPro" id="IPR003789">
    <property type="entry name" value="Asn/Gln_tRNA_amidoTrase-B-like"/>
</dbReference>
<dbReference type="InterPro" id="IPR004413">
    <property type="entry name" value="GatB"/>
</dbReference>
<dbReference type="InterPro" id="IPR042114">
    <property type="entry name" value="GatB_C_1"/>
</dbReference>
<dbReference type="InterPro" id="IPR023168">
    <property type="entry name" value="GatB_Yqey_C_2"/>
</dbReference>
<dbReference type="InterPro" id="IPR017958">
    <property type="entry name" value="Gln-tRNA_amidoTrfase_suB_CS"/>
</dbReference>
<dbReference type="InterPro" id="IPR014746">
    <property type="entry name" value="Gln_synth/guanido_kin_cat_dom"/>
</dbReference>
<dbReference type="NCBIfam" id="TIGR00133">
    <property type="entry name" value="gatB"/>
    <property type="match status" value="1"/>
</dbReference>
<dbReference type="NCBIfam" id="NF004012">
    <property type="entry name" value="PRK05477.1-2"/>
    <property type="match status" value="1"/>
</dbReference>
<dbReference type="NCBIfam" id="NF004014">
    <property type="entry name" value="PRK05477.1-4"/>
    <property type="match status" value="1"/>
</dbReference>
<dbReference type="NCBIfam" id="NF004015">
    <property type="entry name" value="PRK05477.1-5"/>
    <property type="match status" value="1"/>
</dbReference>
<dbReference type="PANTHER" id="PTHR11659">
    <property type="entry name" value="GLUTAMYL-TRNA GLN AMIDOTRANSFERASE SUBUNIT B MITOCHONDRIAL AND PROKARYOTIC PET112-RELATED"/>
    <property type="match status" value="1"/>
</dbReference>
<dbReference type="PANTHER" id="PTHR11659:SF0">
    <property type="entry name" value="GLUTAMYL-TRNA(GLN) AMIDOTRANSFERASE SUBUNIT B, MITOCHONDRIAL"/>
    <property type="match status" value="1"/>
</dbReference>
<dbReference type="Pfam" id="PF02934">
    <property type="entry name" value="GatB_N"/>
    <property type="match status" value="1"/>
</dbReference>
<dbReference type="Pfam" id="PF02637">
    <property type="entry name" value="GatB_Yqey"/>
    <property type="match status" value="1"/>
</dbReference>
<dbReference type="SMART" id="SM00845">
    <property type="entry name" value="GatB_Yqey"/>
    <property type="match status" value="1"/>
</dbReference>
<dbReference type="SUPFAM" id="SSF89095">
    <property type="entry name" value="GatB/YqeY motif"/>
    <property type="match status" value="1"/>
</dbReference>
<dbReference type="SUPFAM" id="SSF55931">
    <property type="entry name" value="Glutamine synthetase/guanido kinase"/>
    <property type="match status" value="1"/>
</dbReference>
<dbReference type="PROSITE" id="PS01234">
    <property type="entry name" value="GATB"/>
    <property type="match status" value="1"/>
</dbReference>
<protein>
    <recommendedName>
        <fullName evidence="1">Aspartyl/glutamyl-tRNA(Asn/Gln) amidotransferase subunit B</fullName>
        <shortName evidence="1">Asp/Glu-ADT subunit B</shortName>
        <ecNumber evidence="1">6.3.5.-</ecNumber>
    </recommendedName>
</protein>